<feature type="chain" id="PRO_1000084321" description="2,3-bisphosphoglycerate-dependent phosphoglycerate mutase">
    <location>
        <begin position="1"/>
        <end position="251"/>
    </location>
</feature>
<feature type="active site" description="Tele-phosphohistidine intermediate" evidence="1">
    <location>
        <position position="12"/>
    </location>
</feature>
<feature type="active site" description="Proton donor/acceptor" evidence="1">
    <location>
        <position position="90"/>
    </location>
</feature>
<feature type="binding site" evidence="1">
    <location>
        <begin position="11"/>
        <end position="18"/>
    </location>
    <ligand>
        <name>substrate</name>
    </ligand>
</feature>
<feature type="binding site" evidence="1">
    <location>
        <begin position="24"/>
        <end position="25"/>
    </location>
    <ligand>
        <name>substrate</name>
    </ligand>
</feature>
<feature type="binding site" evidence="1">
    <location>
        <position position="63"/>
    </location>
    <ligand>
        <name>substrate</name>
    </ligand>
</feature>
<feature type="binding site" evidence="1">
    <location>
        <begin position="90"/>
        <end position="93"/>
    </location>
    <ligand>
        <name>substrate</name>
    </ligand>
</feature>
<feature type="binding site" evidence="1">
    <location>
        <position position="101"/>
    </location>
    <ligand>
        <name>substrate</name>
    </ligand>
</feature>
<feature type="binding site" evidence="1">
    <location>
        <begin position="117"/>
        <end position="118"/>
    </location>
    <ligand>
        <name>substrate</name>
    </ligand>
</feature>
<feature type="binding site" evidence="1">
    <location>
        <begin position="185"/>
        <end position="186"/>
    </location>
    <ligand>
        <name>substrate</name>
    </ligand>
</feature>
<feature type="site" description="Transition state stabilizer" evidence="1">
    <location>
        <position position="184"/>
    </location>
</feature>
<name>GPMA_CLASE</name>
<evidence type="ECO:0000255" key="1">
    <source>
        <dbReference type="HAMAP-Rule" id="MF_01039"/>
    </source>
</evidence>
<protein>
    <recommendedName>
        <fullName evidence="1">2,3-bisphosphoglycerate-dependent phosphoglycerate mutase</fullName>
        <shortName evidence="1">BPG-dependent PGAM</shortName>
        <shortName evidence="1">PGAM</shortName>
        <shortName evidence="1">Phosphoglyceromutase</shortName>
        <shortName evidence="1">dPGM</shortName>
        <ecNumber evidence="1">5.4.2.11</ecNumber>
    </recommendedName>
</protein>
<gene>
    <name evidence="1" type="primary">gpmA</name>
    <name type="ordered locus">CMS2739</name>
</gene>
<organism>
    <name type="scientific">Clavibacter sepedonicus</name>
    <name type="common">Clavibacter michiganensis subsp. sepedonicus</name>
    <dbReference type="NCBI Taxonomy" id="31964"/>
    <lineage>
        <taxon>Bacteria</taxon>
        <taxon>Bacillati</taxon>
        <taxon>Actinomycetota</taxon>
        <taxon>Actinomycetes</taxon>
        <taxon>Micrococcales</taxon>
        <taxon>Microbacteriaceae</taxon>
        <taxon>Clavibacter</taxon>
    </lineage>
</organism>
<dbReference type="EC" id="5.4.2.11" evidence="1"/>
<dbReference type="EMBL" id="AM849034">
    <property type="protein sequence ID" value="CAQ02811.1"/>
    <property type="molecule type" value="Genomic_DNA"/>
</dbReference>
<dbReference type="RefSeq" id="WP_012299979.1">
    <property type="nucleotide sequence ID" value="NZ_MZMN01000003.1"/>
</dbReference>
<dbReference type="SMR" id="B0RAW4"/>
<dbReference type="STRING" id="31964.CMS2739"/>
<dbReference type="KEGG" id="cms:CMS2739"/>
<dbReference type="eggNOG" id="COG0588">
    <property type="taxonomic scope" value="Bacteria"/>
</dbReference>
<dbReference type="HOGENOM" id="CLU_033323_1_1_11"/>
<dbReference type="OrthoDB" id="9781415at2"/>
<dbReference type="UniPathway" id="UPA00109">
    <property type="reaction ID" value="UER00186"/>
</dbReference>
<dbReference type="Proteomes" id="UP000001318">
    <property type="component" value="Chromosome"/>
</dbReference>
<dbReference type="GO" id="GO:0004619">
    <property type="term" value="F:phosphoglycerate mutase activity"/>
    <property type="evidence" value="ECO:0007669"/>
    <property type="project" value="UniProtKB-EC"/>
</dbReference>
<dbReference type="GO" id="GO:0006094">
    <property type="term" value="P:gluconeogenesis"/>
    <property type="evidence" value="ECO:0007669"/>
    <property type="project" value="UniProtKB-UniRule"/>
</dbReference>
<dbReference type="GO" id="GO:0006096">
    <property type="term" value="P:glycolytic process"/>
    <property type="evidence" value="ECO:0007669"/>
    <property type="project" value="UniProtKB-UniRule"/>
</dbReference>
<dbReference type="CDD" id="cd07067">
    <property type="entry name" value="HP_PGM_like"/>
    <property type="match status" value="1"/>
</dbReference>
<dbReference type="FunFam" id="3.40.50.1240:FF:000003">
    <property type="entry name" value="2,3-bisphosphoglycerate-dependent phosphoglycerate mutase"/>
    <property type="match status" value="1"/>
</dbReference>
<dbReference type="Gene3D" id="3.40.50.1240">
    <property type="entry name" value="Phosphoglycerate mutase-like"/>
    <property type="match status" value="1"/>
</dbReference>
<dbReference type="HAMAP" id="MF_01039">
    <property type="entry name" value="PGAM_GpmA"/>
    <property type="match status" value="1"/>
</dbReference>
<dbReference type="InterPro" id="IPR013078">
    <property type="entry name" value="His_Pase_superF_clade-1"/>
</dbReference>
<dbReference type="InterPro" id="IPR029033">
    <property type="entry name" value="His_PPase_superfam"/>
</dbReference>
<dbReference type="InterPro" id="IPR005952">
    <property type="entry name" value="Phosphogly_mut1"/>
</dbReference>
<dbReference type="NCBIfam" id="TIGR01258">
    <property type="entry name" value="pgm_1"/>
    <property type="match status" value="1"/>
</dbReference>
<dbReference type="NCBIfam" id="NF010713">
    <property type="entry name" value="PRK14115.1"/>
    <property type="match status" value="1"/>
</dbReference>
<dbReference type="NCBIfam" id="NF010718">
    <property type="entry name" value="PRK14120.1"/>
    <property type="match status" value="1"/>
</dbReference>
<dbReference type="PANTHER" id="PTHR11931">
    <property type="entry name" value="PHOSPHOGLYCERATE MUTASE"/>
    <property type="match status" value="1"/>
</dbReference>
<dbReference type="Pfam" id="PF00300">
    <property type="entry name" value="His_Phos_1"/>
    <property type="match status" value="1"/>
</dbReference>
<dbReference type="PIRSF" id="PIRSF000709">
    <property type="entry name" value="6PFK_2-Ptase"/>
    <property type="match status" value="1"/>
</dbReference>
<dbReference type="SMART" id="SM00855">
    <property type="entry name" value="PGAM"/>
    <property type="match status" value="1"/>
</dbReference>
<dbReference type="SUPFAM" id="SSF53254">
    <property type="entry name" value="Phosphoglycerate mutase-like"/>
    <property type="match status" value="1"/>
</dbReference>
<comment type="function">
    <text evidence="1">Catalyzes the interconversion of 2-phosphoglycerate and 3-phosphoglycerate.</text>
</comment>
<comment type="catalytic activity">
    <reaction evidence="1">
        <text>(2R)-2-phosphoglycerate = (2R)-3-phosphoglycerate</text>
        <dbReference type="Rhea" id="RHEA:15901"/>
        <dbReference type="ChEBI" id="CHEBI:58272"/>
        <dbReference type="ChEBI" id="CHEBI:58289"/>
        <dbReference type="EC" id="5.4.2.11"/>
    </reaction>
</comment>
<comment type="pathway">
    <text evidence="1">Carbohydrate degradation; glycolysis; pyruvate from D-glyceraldehyde 3-phosphate: step 3/5.</text>
</comment>
<comment type="similarity">
    <text evidence="1">Belongs to the phosphoglycerate mutase family. BPG-dependent PGAM subfamily.</text>
</comment>
<keyword id="KW-0312">Gluconeogenesis</keyword>
<keyword id="KW-0324">Glycolysis</keyword>
<keyword id="KW-0413">Isomerase</keyword>
<sequence length="251" mass="27601">MAEPRTLVLLRHGNSDWNQKNLFTGWVDVELSEQGVAEGQRAGELLAESGILPDVLHTSVLIRAIDTANIALKRAGRSWIPVQRTWRLNERHYGALQGKDKAQTLAEYGPEQFATWRRSFDVPPPPIADDDEYSQSADPRYADLGDTLPRTECLKDVIERMLPYWESDIQPDLASGRTVLVTAHGNSLRALVKHLDGISDADIAELNIPTGIPLVYRLDEDFRPIVPGGEYLDPEAAAAGAAAVAAQGSKK</sequence>
<reference key="1">
    <citation type="journal article" date="2008" name="J. Bacteriol.">
        <title>Genome of the actinomycete plant pathogen Clavibacter michiganensis subsp. sepedonicus suggests recent niche adaptation.</title>
        <authorList>
            <person name="Bentley S.D."/>
            <person name="Corton C."/>
            <person name="Brown S.E."/>
            <person name="Barron A."/>
            <person name="Clark L."/>
            <person name="Doggett J."/>
            <person name="Harris B."/>
            <person name="Ormond D."/>
            <person name="Quail M.A."/>
            <person name="May G."/>
            <person name="Francis D."/>
            <person name="Knudson D."/>
            <person name="Parkhill J."/>
            <person name="Ishimaru C.A."/>
        </authorList>
    </citation>
    <scope>NUCLEOTIDE SEQUENCE [LARGE SCALE GENOMIC DNA]</scope>
    <source>
        <strain>ATCC 33113 / DSM 20744 / JCM 9667 / LMG 2889 / ICMP 2535 / C-1</strain>
    </source>
</reference>
<proteinExistence type="inferred from homology"/>
<accession>B0RAW4</accession>